<accession>Q1I4U6</accession>
<feature type="chain" id="PRO_1000056982" description="DNA gyrase inhibitor YacG">
    <location>
        <begin position="1"/>
        <end position="66"/>
    </location>
</feature>
<feature type="region of interest" description="Disordered" evidence="2">
    <location>
        <begin position="45"/>
        <end position="66"/>
    </location>
</feature>
<feature type="binding site" evidence="1">
    <location>
        <position position="9"/>
    </location>
    <ligand>
        <name>Zn(2+)</name>
        <dbReference type="ChEBI" id="CHEBI:29105"/>
    </ligand>
</feature>
<feature type="binding site" evidence="1">
    <location>
        <position position="12"/>
    </location>
    <ligand>
        <name>Zn(2+)</name>
        <dbReference type="ChEBI" id="CHEBI:29105"/>
    </ligand>
</feature>
<feature type="binding site" evidence="1">
    <location>
        <position position="28"/>
    </location>
    <ligand>
        <name>Zn(2+)</name>
        <dbReference type="ChEBI" id="CHEBI:29105"/>
    </ligand>
</feature>
<feature type="binding site" evidence="1">
    <location>
        <position position="32"/>
    </location>
    <ligand>
        <name>Zn(2+)</name>
        <dbReference type="ChEBI" id="CHEBI:29105"/>
    </ligand>
</feature>
<reference key="1">
    <citation type="journal article" date="2006" name="Nat. Biotechnol.">
        <title>Complete genome sequence of the entomopathogenic and metabolically versatile soil bacterium Pseudomonas entomophila.</title>
        <authorList>
            <person name="Vodovar N."/>
            <person name="Vallenet D."/>
            <person name="Cruveiller S."/>
            <person name="Rouy Z."/>
            <person name="Barbe V."/>
            <person name="Acosta C."/>
            <person name="Cattolico L."/>
            <person name="Jubin C."/>
            <person name="Lajus A."/>
            <person name="Segurens B."/>
            <person name="Vacherie B."/>
            <person name="Wincker P."/>
            <person name="Weissenbach J."/>
            <person name="Lemaitre B."/>
            <person name="Medigue C."/>
            <person name="Boccard F."/>
        </authorList>
    </citation>
    <scope>NUCLEOTIDE SEQUENCE [LARGE SCALE GENOMIC DNA]</scope>
    <source>
        <strain>L48</strain>
    </source>
</reference>
<dbReference type="EMBL" id="CT573326">
    <property type="protein sequence ID" value="CAK17340.1"/>
    <property type="molecule type" value="Genomic_DNA"/>
</dbReference>
<dbReference type="RefSeq" id="WP_011535705.1">
    <property type="nucleotide sequence ID" value="NC_008027.1"/>
</dbReference>
<dbReference type="SMR" id="Q1I4U6"/>
<dbReference type="STRING" id="384676.PSEEN4670"/>
<dbReference type="GeneID" id="58770170"/>
<dbReference type="KEGG" id="pen:PSEEN4670"/>
<dbReference type="eggNOG" id="COG3024">
    <property type="taxonomic scope" value="Bacteria"/>
</dbReference>
<dbReference type="HOGENOM" id="CLU_178280_3_2_6"/>
<dbReference type="OrthoDB" id="9809663at2"/>
<dbReference type="Proteomes" id="UP000000658">
    <property type="component" value="Chromosome"/>
</dbReference>
<dbReference type="GO" id="GO:0008657">
    <property type="term" value="F:DNA topoisomerase type II (double strand cut, ATP-hydrolyzing) inhibitor activity"/>
    <property type="evidence" value="ECO:0007669"/>
    <property type="project" value="UniProtKB-UniRule"/>
</dbReference>
<dbReference type="GO" id="GO:0008270">
    <property type="term" value="F:zinc ion binding"/>
    <property type="evidence" value="ECO:0007669"/>
    <property type="project" value="UniProtKB-UniRule"/>
</dbReference>
<dbReference type="GO" id="GO:0006355">
    <property type="term" value="P:regulation of DNA-templated transcription"/>
    <property type="evidence" value="ECO:0007669"/>
    <property type="project" value="InterPro"/>
</dbReference>
<dbReference type="Gene3D" id="3.30.50.10">
    <property type="entry name" value="Erythroid Transcription Factor GATA-1, subunit A"/>
    <property type="match status" value="1"/>
</dbReference>
<dbReference type="HAMAP" id="MF_00649">
    <property type="entry name" value="DNA_gyrase_inhibitor_YacG"/>
    <property type="match status" value="1"/>
</dbReference>
<dbReference type="InterPro" id="IPR005584">
    <property type="entry name" value="DNA_gyrase_inhibitor_YacG"/>
</dbReference>
<dbReference type="InterPro" id="IPR013088">
    <property type="entry name" value="Znf_NHR/GATA"/>
</dbReference>
<dbReference type="NCBIfam" id="NF001638">
    <property type="entry name" value="PRK00418.1"/>
    <property type="match status" value="1"/>
</dbReference>
<dbReference type="PANTHER" id="PTHR36150">
    <property type="entry name" value="DNA GYRASE INHIBITOR YACG"/>
    <property type="match status" value="1"/>
</dbReference>
<dbReference type="PANTHER" id="PTHR36150:SF1">
    <property type="entry name" value="DNA GYRASE INHIBITOR YACG"/>
    <property type="match status" value="1"/>
</dbReference>
<dbReference type="Pfam" id="PF03884">
    <property type="entry name" value="YacG"/>
    <property type="match status" value="1"/>
</dbReference>
<dbReference type="SUPFAM" id="SSF57716">
    <property type="entry name" value="Glucocorticoid receptor-like (DNA-binding domain)"/>
    <property type="match status" value="1"/>
</dbReference>
<comment type="function">
    <text evidence="1">Inhibits all the catalytic activities of DNA gyrase by preventing its interaction with DNA. Acts by binding directly to the C-terminal domain of GyrB, which probably disrupts DNA binding by the gyrase.</text>
</comment>
<comment type="cofactor">
    <cofactor evidence="1">
        <name>Zn(2+)</name>
        <dbReference type="ChEBI" id="CHEBI:29105"/>
    </cofactor>
    <text evidence="1">Binds 1 zinc ion.</text>
</comment>
<comment type="subunit">
    <text evidence="1">Interacts with GyrB.</text>
</comment>
<comment type="similarity">
    <text evidence="1">Belongs to the DNA gyrase inhibitor YacG family.</text>
</comment>
<organism>
    <name type="scientific">Pseudomonas entomophila (strain L48)</name>
    <dbReference type="NCBI Taxonomy" id="384676"/>
    <lineage>
        <taxon>Bacteria</taxon>
        <taxon>Pseudomonadati</taxon>
        <taxon>Pseudomonadota</taxon>
        <taxon>Gammaproteobacteria</taxon>
        <taxon>Pseudomonadales</taxon>
        <taxon>Pseudomonadaceae</taxon>
        <taxon>Pseudomonas</taxon>
    </lineage>
</organism>
<evidence type="ECO:0000255" key="1">
    <source>
        <dbReference type="HAMAP-Rule" id="MF_00649"/>
    </source>
</evidence>
<evidence type="ECO:0000256" key="2">
    <source>
        <dbReference type="SAM" id="MobiDB-lite"/>
    </source>
</evidence>
<gene>
    <name evidence="1" type="primary">yacG</name>
    <name type="ordered locus">PSEEN4670</name>
</gene>
<name>YACG_PSEE4</name>
<protein>
    <recommendedName>
        <fullName evidence="1">DNA gyrase inhibitor YacG</fullName>
    </recommendedName>
</protein>
<keyword id="KW-0479">Metal-binding</keyword>
<keyword id="KW-0862">Zinc</keyword>
<sequence length="66" mass="7325">MSQPMTVDCPTCGAPVEWGEKSPFRPFCSDRCKLIDLGAWAAEEHKIAGAEESEDELYSGDLEPRH</sequence>
<proteinExistence type="inferred from homology"/>